<sequence>MSLEPLPGTLENLLEQTSLKWIFVGGKGGVGKTTTSCSLAIQMSKVRKSVLLISTDPAHNLSDAFGTKFGKEARLIPGFENLSAMEIDPNASIQEMLEQSEQQNPNNPMSGMMQDLAFAIPGIDEALAFAEVMKEVKSMNFDCVIFDTAPTGHTLRFLNFPTVLEKALAKLSGLTSRFGPLINQMSGMLGTNTNQEDIFAKMEGMRGSISEVNKQFKNPDLTTFVCVCISEFLSLYETERMIQELTSYEIDTHNIVVNQLLLDPDTKCPQCIARRKMQQKYLSQIEELYEDFHIVKVPQVPSEVRGTEALTKFSDLLIHPYVKE</sequence>
<evidence type="ECO:0000255" key="1">
    <source>
        <dbReference type="HAMAP-Rule" id="MF_03112"/>
    </source>
</evidence>
<name>GET3_SCHJY</name>
<protein>
    <recommendedName>
        <fullName evidence="1">ATPase get3</fullName>
        <ecNumber evidence="1">3.6.-.-</ecNumber>
    </recommendedName>
    <alternativeName>
        <fullName evidence="1">Arsenical pump-driving ATPase</fullName>
    </alternativeName>
    <alternativeName>
        <fullName evidence="1">Arsenite-stimulated ATPase</fullName>
    </alternativeName>
    <alternativeName>
        <fullName evidence="1">Golgi to ER traffic protein 3</fullName>
    </alternativeName>
    <alternativeName>
        <fullName evidence="1">Guided entry of tail-anchored proteins 3</fullName>
    </alternativeName>
</protein>
<organism>
    <name type="scientific">Schizosaccharomyces japonicus (strain yFS275 / FY16936)</name>
    <name type="common">Fission yeast</name>
    <dbReference type="NCBI Taxonomy" id="402676"/>
    <lineage>
        <taxon>Eukaryota</taxon>
        <taxon>Fungi</taxon>
        <taxon>Dikarya</taxon>
        <taxon>Ascomycota</taxon>
        <taxon>Taphrinomycotina</taxon>
        <taxon>Schizosaccharomycetes</taxon>
        <taxon>Schizosaccharomycetales</taxon>
        <taxon>Schizosaccharomycetaceae</taxon>
        <taxon>Schizosaccharomyces</taxon>
    </lineage>
</organism>
<accession>B6K052</accession>
<gene>
    <name type="primary">get3</name>
    <name type="ORF">SJAG_01240</name>
</gene>
<keyword id="KW-0067">ATP-binding</keyword>
<keyword id="KW-0963">Cytoplasm</keyword>
<keyword id="KW-0256">Endoplasmic reticulum</keyword>
<keyword id="KW-0378">Hydrolase</keyword>
<keyword id="KW-0479">Metal-binding</keyword>
<keyword id="KW-0547">Nucleotide-binding</keyword>
<keyword id="KW-1185">Reference proteome</keyword>
<keyword id="KW-0813">Transport</keyword>
<keyword id="KW-0862">Zinc</keyword>
<comment type="function">
    <text evidence="1">ATPase required for the post-translational delivery of tail-anchored (TA) proteins to the endoplasmic reticulum. Recognizes and selectively binds the transmembrane domain of TA proteins in the cytosol. This complex then targets to the endoplasmic reticulum by membrane-bound receptors, where the tail-anchored protein is released for insertion. This process is regulated by ATP binding and hydrolysis. ATP binding drives the homodimer towards the closed dimer state, facilitating recognition of newly synthesized TA membrane proteins. ATP hydrolysis is required for insertion. Subsequently, the homodimer reverts towards the open dimer state, lowering its affinity for the membrane-bound receptor, and returning it to the cytosol to initiate a new round of targeting.</text>
</comment>
<comment type="subunit">
    <text evidence="1">Homodimer.</text>
</comment>
<comment type="subcellular location">
    <subcellularLocation>
        <location evidence="1">Cytoplasm</location>
    </subcellularLocation>
    <subcellularLocation>
        <location evidence="1">Endoplasmic reticulum</location>
    </subcellularLocation>
</comment>
<comment type="similarity">
    <text evidence="1">Belongs to the arsA ATPase family.</text>
</comment>
<dbReference type="EC" id="3.6.-.-" evidence="1"/>
<dbReference type="EMBL" id="KE651168">
    <property type="protein sequence ID" value="EEB06202.1"/>
    <property type="molecule type" value="Genomic_DNA"/>
</dbReference>
<dbReference type="RefSeq" id="XP_002172495.1">
    <property type="nucleotide sequence ID" value="XM_002172459.2"/>
</dbReference>
<dbReference type="SMR" id="B6K052"/>
<dbReference type="STRING" id="402676.B6K052"/>
<dbReference type="EnsemblFungi" id="EEB06202">
    <property type="protein sequence ID" value="EEB06202"/>
    <property type="gene ID" value="SJAG_01240"/>
</dbReference>
<dbReference type="GeneID" id="7048391"/>
<dbReference type="JaponicusDB" id="SJAG_01240">
    <property type="gene designation" value="get3"/>
</dbReference>
<dbReference type="VEuPathDB" id="FungiDB:SJAG_01240"/>
<dbReference type="eggNOG" id="KOG2825">
    <property type="taxonomic scope" value="Eukaryota"/>
</dbReference>
<dbReference type="HOGENOM" id="CLU_040761_0_0_1"/>
<dbReference type="OMA" id="MDAPYEF"/>
<dbReference type="OrthoDB" id="1770at2759"/>
<dbReference type="Proteomes" id="UP000001744">
    <property type="component" value="Unassembled WGS sequence"/>
</dbReference>
<dbReference type="GO" id="GO:0043529">
    <property type="term" value="C:GET complex"/>
    <property type="evidence" value="ECO:0000318"/>
    <property type="project" value="GO_Central"/>
</dbReference>
<dbReference type="GO" id="GO:0005524">
    <property type="term" value="F:ATP binding"/>
    <property type="evidence" value="ECO:0007669"/>
    <property type="project" value="UniProtKB-UniRule"/>
</dbReference>
<dbReference type="GO" id="GO:0016887">
    <property type="term" value="F:ATP hydrolysis activity"/>
    <property type="evidence" value="ECO:0000318"/>
    <property type="project" value="GO_Central"/>
</dbReference>
<dbReference type="GO" id="GO:0042802">
    <property type="term" value="F:identical protein binding"/>
    <property type="evidence" value="ECO:0007669"/>
    <property type="project" value="EnsemblFungi"/>
</dbReference>
<dbReference type="GO" id="GO:0046872">
    <property type="term" value="F:metal ion binding"/>
    <property type="evidence" value="ECO:0007669"/>
    <property type="project" value="UniProtKB-KW"/>
</dbReference>
<dbReference type="GO" id="GO:0071816">
    <property type="term" value="P:tail-anchored membrane protein insertion into ER membrane"/>
    <property type="evidence" value="ECO:0000318"/>
    <property type="project" value="GO_Central"/>
</dbReference>
<dbReference type="CDD" id="cd02035">
    <property type="entry name" value="ArsA"/>
    <property type="match status" value="1"/>
</dbReference>
<dbReference type="FunFam" id="3.40.50.300:FF:000235">
    <property type="entry name" value="ATPase ASNA1"/>
    <property type="match status" value="1"/>
</dbReference>
<dbReference type="Gene3D" id="3.40.50.300">
    <property type="entry name" value="P-loop containing nucleotide triphosphate hydrolases"/>
    <property type="match status" value="1"/>
</dbReference>
<dbReference type="HAMAP" id="MF_03112">
    <property type="entry name" value="Asna1_Get3"/>
    <property type="match status" value="1"/>
</dbReference>
<dbReference type="InterPro" id="IPR025723">
    <property type="entry name" value="Anion-transp_ATPase-like_dom"/>
</dbReference>
<dbReference type="InterPro" id="IPR016300">
    <property type="entry name" value="ATPase_ArsA/GET3"/>
</dbReference>
<dbReference type="InterPro" id="IPR027542">
    <property type="entry name" value="ATPase_ArsA/GET3_euk"/>
</dbReference>
<dbReference type="InterPro" id="IPR027417">
    <property type="entry name" value="P-loop_NTPase"/>
</dbReference>
<dbReference type="NCBIfam" id="TIGR00345">
    <property type="entry name" value="GET3_arsA_TRC40"/>
    <property type="match status" value="1"/>
</dbReference>
<dbReference type="PANTHER" id="PTHR10803">
    <property type="entry name" value="ARSENICAL PUMP-DRIVING ATPASE ARSENITE-TRANSLOCATING ATPASE"/>
    <property type="match status" value="1"/>
</dbReference>
<dbReference type="PANTHER" id="PTHR10803:SF3">
    <property type="entry name" value="ATPASE GET3"/>
    <property type="match status" value="1"/>
</dbReference>
<dbReference type="Pfam" id="PF02374">
    <property type="entry name" value="ArsA_ATPase"/>
    <property type="match status" value="1"/>
</dbReference>
<dbReference type="SUPFAM" id="SSF52540">
    <property type="entry name" value="P-loop containing nucleoside triphosphate hydrolases"/>
    <property type="match status" value="1"/>
</dbReference>
<reference key="1">
    <citation type="journal article" date="2011" name="Science">
        <title>Comparative functional genomics of the fission yeasts.</title>
        <authorList>
            <person name="Rhind N."/>
            <person name="Chen Z."/>
            <person name="Yassour M."/>
            <person name="Thompson D.A."/>
            <person name="Haas B.J."/>
            <person name="Habib N."/>
            <person name="Wapinski I."/>
            <person name="Roy S."/>
            <person name="Lin M.F."/>
            <person name="Heiman D.I."/>
            <person name="Young S.K."/>
            <person name="Furuya K."/>
            <person name="Guo Y."/>
            <person name="Pidoux A."/>
            <person name="Chen H.M."/>
            <person name="Robbertse B."/>
            <person name="Goldberg J.M."/>
            <person name="Aoki K."/>
            <person name="Bayne E.H."/>
            <person name="Berlin A.M."/>
            <person name="Desjardins C.A."/>
            <person name="Dobbs E."/>
            <person name="Dukaj L."/>
            <person name="Fan L."/>
            <person name="FitzGerald M.G."/>
            <person name="French C."/>
            <person name="Gujja S."/>
            <person name="Hansen K."/>
            <person name="Keifenheim D."/>
            <person name="Levin J.Z."/>
            <person name="Mosher R.A."/>
            <person name="Mueller C.A."/>
            <person name="Pfiffner J."/>
            <person name="Priest M."/>
            <person name="Russ C."/>
            <person name="Smialowska A."/>
            <person name="Swoboda P."/>
            <person name="Sykes S.M."/>
            <person name="Vaughn M."/>
            <person name="Vengrova S."/>
            <person name="Yoder R."/>
            <person name="Zeng Q."/>
            <person name="Allshire R."/>
            <person name="Baulcombe D."/>
            <person name="Birren B.W."/>
            <person name="Brown W."/>
            <person name="Ekwall K."/>
            <person name="Kellis M."/>
            <person name="Leatherwood J."/>
            <person name="Levin H."/>
            <person name="Margalit H."/>
            <person name="Martienssen R."/>
            <person name="Nieduszynski C.A."/>
            <person name="Spatafora J.W."/>
            <person name="Friedman N."/>
            <person name="Dalgaard J.Z."/>
            <person name="Baumann P."/>
            <person name="Niki H."/>
            <person name="Regev A."/>
            <person name="Nusbaum C."/>
        </authorList>
    </citation>
    <scope>NUCLEOTIDE SEQUENCE [LARGE SCALE GENOMIC DNA]</scope>
    <source>
        <strain>yFS275 / FY16936</strain>
    </source>
</reference>
<feature type="chain" id="PRO_0000388231" description="ATPase get3">
    <location>
        <begin position="1"/>
        <end position="324"/>
    </location>
</feature>
<feature type="active site" evidence="1">
    <location>
        <position position="56"/>
    </location>
</feature>
<feature type="binding site" evidence="1">
    <location>
        <begin position="27"/>
        <end position="34"/>
    </location>
    <ligand>
        <name>ATP</name>
        <dbReference type="ChEBI" id="CHEBI:30616"/>
    </ligand>
</feature>
<feature type="binding site" evidence="1">
    <location>
        <position position="231"/>
    </location>
    <ligand>
        <name>ATP</name>
        <dbReference type="ChEBI" id="CHEBI:30616"/>
    </ligand>
</feature>
<feature type="binding site" evidence="1">
    <location>
        <position position="258"/>
    </location>
    <ligand>
        <name>ATP</name>
        <dbReference type="ChEBI" id="CHEBI:30616"/>
    </ligand>
</feature>
<feature type="binding site" evidence="1">
    <location>
        <position position="268"/>
    </location>
    <ligand>
        <name>Zn(2+)</name>
        <dbReference type="ChEBI" id="CHEBI:29105"/>
        <note>ligand shared between dimeric partners</note>
    </ligand>
</feature>
<feature type="binding site" evidence="1">
    <location>
        <position position="271"/>
    </location>
    <ligand>
        <name>Zn(2+)</name>
        <dbReference type="ChEBI" id="CHEBI:29105"/>
        <note>ligand shared between dimeric partners</note>
    </ligand>
</feature>
<proteinExistence type="inferred from homology"/>